<evidence type="ECO:0000255" key="1">
    <source>
        <dbReference type="HAMAP-Rule" id="MF_00214"/>
    </source>
</evidence>
<accession>A4YHV8</accession>
<proteinExistence type="inferred from homology"/>
<dbReference type="EC" id="4.2.1.10" evidence="1"/>
<dbReference type="EMBL" id="CP000682">
    <property type="protein sequence ID" value="ABP96010.1"/>
    <property type="molecule type" value="Genomic_DNA"/>
</dbReference>
<dbReference type="RefSeq" id="WP_012021797.1">
    <property type="nucleotide sequence ID" value="NZ_CP139956.1"/>
</dbReference>
<dbReference type="SMR" id="A4YHV8"/>
<dbReference type="STRING" id="399549.Msed_1870"/>
<dbReference type="KEGG" id="mse:Msed_1870"/>
<dbReference type="eggNOG" id="arCOG02097">
    <property type="taxonomic scope" value="Archaea"/>
</dbReference>
<dbReference type="HOGENOM" id="CLU_064444_2_0_2"/>
<dbReference type="UniPathway" id="UPA00053">
    <property type="reaction ID" value="UER00086"/>
</dbReference>
<dbReference type="Proteomes" id="UP000000242">
    <property type="component" value="Chromosome"/>
</dbReference>
<dbReference type="GO" id="GO:0003855">
    <property type="term" value="F:3-dehydroquinate dehydratase activity"/>
    <property type="evidence" value="ECO:0007669"/>
    <property type="project" value="UniProtKB-UniRule"/>
</dbReference>
<dbReference type="GO" id="GO:0046279">
    <property type="term" value="P:3,4-dihydroxybenzoate biosynthetic process"/>
    <property type="evidence" value="ECO:0007669"/>
    <property type="project" value="TreeGrafter"/>
</dbReference>
<dbReference type="GO" id="GO:0008652">
    <property type="term" value="P:amino acid biosynthetic process"/>
    <property type="evidence" value="ECO:0007669"/>
    <property type="project" value="UniProtKB-KW"/>
</dbReference>
<dbReference type="GO" id="GO:0009073">
    <property type="term" value="P:aromatic amino acid family biosynthetic process"/>
    <property type="evidence" value="ECO:0007669"/>
    <property type="project" value="UniProtKB-KW"/>
</dbReference>
<dbReference type="GO" id="GO:0009423">
    <property type="term" value="P:chorismate biosynthetic process"/>
    <property type="evidence" value="ECO:0007669"/>
    <property type="project" value="UniProtKB-UniRule"/>
</dbReference>
<dbReference type="Gene3D" id="3.20.20.70">
    <property type="entry name" value="Aldolase class I"/>
    <property type="match status" value="1"/>
</dbReference>
<dbReference type="HAMAP" id="MF_00214">
    <property type="entry name" value="AroD"/>
    <property type="match status" value="1"/>
</dbReference>
<dbReference type="InterPro" id="IPR013785">
    <property type="entry name" value="Aldolase_TIM"/>
</dbReference>
<dbReference type="InterPro" id="IPR001381">
    <property type="entry name" value="DHquinase_I"/>
</dbReference>
<dbReference type="InterPro" id="IPR050146">
    <property type="entry name" value="Type-I_3-dehydroquinase"/>
</dbReference>
<dbReference type="NCBIfam" id="NF010091">
    <property type="entry name" value="PRK13576.1"/>
    <property type="match status" value="1"/>
</dbReference>
<dbReference type="PANTHER" id="PTHR43699">
    <property type="entry name" value="3-DEHYDROQUINATE DEHYDRATASE"/>
    <property type="match status" value="1"/>
</dbReference>
<dbReference type="PANTHER" id="PTHR43699:SF1">
    <property type="entry name" value="3-DEHYDROQUINATE DEHYDRATASE"/>
    <property type="match status" value="1"/>
</dbReference>
<dbReference type="Pfam" id="PF01487">
    <property type="entry name" value="DHquinase_I"/>
    <property type="match status" value="1"/>
</dbReference>
<dbReference type="SUPFAM" id="SSF51569">
    <property type="entry name" value="Aldolase"/>
    <property type="match status" value="1"/>
</dbReference>
<gene>
    <name evidence="1" type="primary">aroD</name>
    <name type="ordered locus">Msed_1870</name>
</gene>
<sequence length="204" mass="23530">MNRPLIVASLPVTSPGDISRVKDIDADLVELRLDYSREFPRPQDLLPYRDRILVTLRDREEGGQGNFTDNFKETFLNELMKLGILYDVEASFLSRRRVQFREKVVSAHYFHRLPSREEVDCLFSTYREAFTVKIAVSNLPGYREILSYISTKPGSTFMPMSPDPLERLAISLLGSRLLYTYVDSPTATGQLHYLEAKRILNCLF</sequence>
<comment type="function">
    <text evidence="1">Involved in the third step of the chorismate pathway, which leads to the biosynthesis of aromatic amino acids. Catalyzes the cis-dehydration of 3-dehydroquinate (DHQ) and introduces the first double bond of the aromatic ring to yield 3-dehydroshikimate.</text>
</comment>
<comment type="catalytic activity">
    <reaction evidence="1">
        <text>3-dehydroquinate = 3-dehydroshikimate + H2O</text>
        <dbReference type="Rhea" id="RHEA:21096"/>
        <dbReference type="ChEBI" id="CHEBI:15377"/>
        <dbReference type="ChEBI" id="CHEBI:16630"/>
        <dbReference type="ChEBI" id="CHEBI:32364"/>
        <dbReference type="EC" id="4.2.1.10"/>
    </reaction>
</comment>
<comment type="pathway">
    <text evidence="1">Metabolic intermediate biosynthesis; chorismate biosynthesis; chorismate from D-erythrose 4-phosphate and phosphoenolpyruvate: step 3/7.</text>
</comment>
<comment type="subunit">
    <text evidence="1">Homodimer.</text>
</comment>
<comment type="similarity">
    <text evidence="1">Belongs to the type-I 3-dehydroquinase family.</text>
</comment>
<keyword id="KW-0028">Amino-acid biosynthesis</keyword>
<keyword id="KW-0057">Aromatic amino acid biosynthesis</keyword>
<keyword id="KW-0456">Lyase</keyword>
<keyword id="KW-1185">Reference proteome</keyword>
<keyword id="KW-0704">Schiff base</keyword>
<feature type="chain" id="PRO_0000325534" description="3-dehydroquinate dehydratase">
    <location>
        <begin position="1"/>
        <end position="204"/>
    </location>
</feature>
<feature type="active site" description="Proton donor/acceptor" evidence="1">
    <location>
        <position position="108"/>
    </location>
</feature>
<feature type="active site" description="Schiff-base intermediate with substrate" evidence="1">
    <location>
        <position position="133"/>
    </location>
</feature>
<feature type="binding site" evidence="1">
    <location>
        <position position="9"/>
    </location>
    <ligand>
        <name>3-dehydroquinate</name>
        <dbReference type="ChEBI" id="CHEBI:32364"/>
    </ligand>
</feature>
<feature type="binding site" evidence="1">
    <location>
        <begin position="30"/>
        <end position="32"/>
    </location>
    <ligand>
        <name>3-dehydroquinate</name>
        <dbReference type="ChEBI" id="CHEBI:32364"/>
    </ligand>
</feature>
<feature type="binding site" evidence="1">
    <location>
        <position position="57"/>
    </location>
    <ligand>
        <name>3-dehydroquinate</name>
        <dbReference type="ChEBI" id="CHEBI:32364"/>
    </ligand>
</feature>
<feature type="binding site" evidence="1">
    <location>
        <position position="167"/>
    </location>
    <ligand>
        <name>3-dehydroquinate</name>
        <dbReference type="ChEBI" id="CHEBI:32364"/>
    </ligand>
</feature>
<feature type="binding site" evidence="1">
    <location>
        <position position="186"/>
    </location>
    <ligand>
        <name>3-dehydroquinate</name>
        <dbReference type="ChEBI" id="CHEBI:32364"/>
    </ligand>
</feature>
<feature type="binding site" evidence="1">
    <location>
        <position position="190"/>
    </location>
    <ligand>
        <name>3-dehydroquinate</name>
        <dbReference type="ChEBI" id="CHEBI:32364"/>
    </ligand>
</feature>
<reference key="1">
    <citation type="journal article" date="2008" name="Appl. Environ. Microbiol.">
        <title>The genome sequence of the metal-mobilizing, extremely thermoacidophilic archaeon Metallosphaera sedula provides insights into bioleaching-associated metabolism.</title>
        <authorList>
            <person name="Auernik K.S."/>
            <person name="Maezato Y."/>
            <person name="Blum P.H."/>
            <person name="Kelly R.M."/>
        </authorList>
    </citation>
    <scope>NUCLEOTIDE SEQUENCE [LARGE SCALE GENOMIC DNA]</scope>
    <source>
        <strain>ATCC 51363 / DSM 5348 / JCM 9185 / NBRC 15509 / TH2</strain>
    </source>
</reference>
<protein>
    <recommendedName>
        <fullName evidence="1">3-dehydroquinate dehydratase</fullName>
        <shortName evidence="1">3-dehydroquinase</shortName>
        <ecNumber evidence="1">4.2.1.10</ecNumber>
    </recommendedName>
    <alternativeName>
        <fullName evidence="1">Type I DHQase</fullName>
    </alternativeName>
    <alternativeName>
        <fullName evidence="1">Type I dehydroquinase</fullName>
        <shortName evidence="1">DHQ1</shortName>
    </alternativeName>
</protein>
<organism>
    <name type="scientific">Metallosphaera sedula (strain ATCC 51363 / DSM 5348 / JCM 9185 / NBRC 15509 / TH2)</name>
    <dbReference type="NCBI Taxonomy" id="399549"/>
    <lineage>
        <taxon>Archaea</taxon>
        <taxon>Thermoproteota</taxon>
        <taxon>Thermoprotei</taxon>
        <taxon>Sulfolobales</taxon>
        <taxon>Sulfolobaceae</taxon>
        <taxon>Metallosphaera</taxon>
    </lineage>
</organism>
<name>AROD_METS5</name>